<name>CSTL1_HUMAN</name>
<dbReference type="EMBL" id="AY707749">
    <property type="protein sequence ID" value="AAU20813.1"/>
    <property type="molecule type" value="mRNA"/>
</dbReference>
<dbReference type="EMBL" id="AL096677">
    <property type="status" value="NOT_ANNOTATED_CDS"/>
    <property type="molecule type" value="Genomic_DNA"/>
</dbReference>
<dbReference type="EMBL" id="BC117396">
    <property type="protein sequence ID" value="AAI17397.1"/>
    <property type="molecule type" value="mRNA"/>
</dbReference>
<dbReference type="CCDS" id="CCDS13153.1"/>
<dbReference type="RefSeq" id="NP_612140.1">
    <property type="nucleotide sequence ID" value="NM_138283.1"/>
</dbReference>
<dbReference type="SMR" id="Q9H114"/>
<dbReference type="BioGRID" id="126157">
    <property type="interactions" value="117"/>
</dbReference>
<dbReference type="FunCoup" id="Q9H114">
    <property type="interactions" value="13"/>
</dbReference>
<dbReference type="IntAct" id="Q9H114">
    <property type="interactions" value="55"/>
</dbReference>
<dbReference type="STRING" id="9606.ENSP00000344907"/>
<dbReference type="GlyCosmos" id="Q9H114">
    <property type="glycosylation" value="1 site, No reported glycans"/>
</dbReference>
<dbReference type="GlyGen" id="Q9H114">
    <property type="glycosylation" value="1 site"/>
</dbReference>
<dbReference type="PhosphoSitePlus" id="Q9H114"/>
<dbReference type="BioMuta" id="CSTL1"/>
<dbReference type="DMDM" id="76803549"/>
<dbReference type="MassIVE" id="Q9H114"/>
<dbReference type="PaxDb" id="9606-ENSP00000344907"/>
<dbReference type="Antibodypedia" id="42866">
    <property type="antibodies" value="94 antibodies from 20 providers"/>
</dbReference>
<dbReference type="DNASU" id="128817"/>
<dbReference type="Ensembl" id="ENST00000246020.3">
    <property type="protein sequence ID" value="ENSP00000246020.2"/>
    <property type="gene ID" value="ENSG00000125823.13"/>
</dbReference>
<dbReference type="Ensembl" id="ENST00000347397.5">
    <property type="protein sequence ID" value="ENSP00000344907.1"/>
    <property type="gene ID" value="ENSG00000125823.13"/>
</dbReference>
<dbReference type="GeneID" id="128817"/>
<dbReference type="KEGG" id="hsa:128817"/>
<dbReference type="MANE-Select" id="ENST00000347397.5">
    <property type="protein sequence ID" value="ENSP00000344907.1"/>
    <property type="RefSeq nucleotide sequence ID" value="NM_138283.1"/>
    <property type="RefSeq protein sequence ID" value="NP_612140.1"/>
</dbReference>
<dbReference type="UCSC" id="uc002wte.3">
    <property type="organism name" value="human"/>
</dbReference>
<dbReference type="AGR" id="HGNC:15958"/>
<dbReference type="CTD" id="128817"/>
<dbReference type="DisGeNET" id="128817"/>
<dbReference type="GeneCards" id="CSTL1"/>
<dbReference type="HGNC" id="HGNC:15958">
    <property type="gene designation" value="CSTL1"/>
</dbReference>
<dbReference type="HPA" id="ENSG00000125823">
    <property type="expression patterns" value="Tissue enriched (testis)"/>
</dbReference>
<dbReference type="neXtProt" id="NX_Q9H114"/>
<dbReference type="OpenTargets" id="ENSG00000125823"/>
<dbReference type="PharmGKB" id="PA26988"/>
<dbReference type="VEuPathDB" id="HostDB:ENSG00000125823"/>
<dbReference type="eggNOG" id="ENOG502SAEJ">
    <property type="taxonomic scope" value="Eukaryota"/>
</dbReference>
<dbReference type="GeneTree" id="ENSGT00900000141212"/>
<dbReference type="HOGENOM" id="CLU_118168_0_1_1"/>
<dbReference type="InParanoid" id="Q9H114"/>
<dbReference type="OMA" id="FQRWGGF"/>
<dbReference type="OrthoDB" id="1908104at2759"/>
<dbReference type="PAN-GO" id="Q9H114">
    <property type="GO annotations" value="0 GO annotations based on evolutionary models"/>
</dbReference>
<dbReference type="PhylomeDB" id="Q9H114"/>
<dbReference type="PathwayCommons" id="Q9H114"/>
<dbReference type="BioGRID-ORCS" id="128817">
    <property type="hits" value="20 hits in 1143 CRISPR screens"/>
</dbReference>
<dbReference type="ChiTaRS" id="CSTL1">
    <property type="organism name" value="human"/>
</dbReference>
<dbReference type="GeneWiki" id="CSTL1"/>
<dbReference type="GenomeRNAi" id="128817"/>
<dbReference type="Pharos" id="Q9H114">
    <property type="development level" value="Tbio"/>
</dbReference>
<dbReference type="PRO" id="PR:Q9H114"/>
<dbReference type="Proteomes" id="UP000005640">
    <property type="component" value="Chromosome 20"/>
</dbReference>
<dbReference type="RNAct" id="Q9H114">
    <property type="molecule type" value="protein"/>
</dbReference>
<dbReference type="Bgee" id="ENSG00000125823">
    <property type="expression patterns" value="Expressed in male germ line stem cell (sensu Vertebrata) in testis and 64 other cell types or tissues"/>
</dbReference>
<dbReference type="ExpressionAtlas" id="Q9H114">
    <property type="expression patterns" value="baseline and differential"/>
</dbReference>
<dbReference type="GO" id="GO:0005576">
    <property type="term" value="C:extracellular region"/>
    <property type="evidence" value="ECO:0007669"/>
    <property type="project" value="UniProtKB-SubCell"/>
</dbReference>
<dbReference type="GO" id="GO:0004869">
    <property type="term" value="F:cysteine-type endopeptidase inhibitor activity"/>
    <property type="evidence" value="ECO:0007669"/>
    <property type="project" value="UniProtKB-KW"/>
</dbReference>
<dbReference type="GO" id="GO:0008234">
    <property type="term" value="F:cysteine-type peptidase activity"/>
    <property type="evidence" value="ECO:0000318"/>
    <property type="project" value="GO_Central"/>
</dbReference>
<dbReference type="GO" id="GO:0140448">
    <property type="term" value="P:signaling receptor ligand precursor processing"/>
    <property type="evidence" value="ECO:0000318"/>
    <property type="project" value="GO_Central"/>
</dbReference>
<dbReference type="CDD" id="cd00042">
    <property type="entry name" value="CY"/>
    <property type="match status" value="1"/>
</dbReference>
<dbReference type="FunFam" id="3.10.450.10:FF:000004">
    <property type="entry name" value="Cystatin C"/>
    <property type="match status" value="1"/>
</dbReference>
<dbReference type="Gene3D" id="3.10.450.10">
    <property type="match status" value="1"/>
</dbReference>
<dbReference type="InterPro" id="IPR042921">
    <property type="entry name" value="CSTL1"/>
</dbReference>
<dbReference type="InterPro" id="IPR000010">
    <property type="entry name" value="Cystatin_dom"/>
</dbReference>
<dbReference type="InterPro" id="IPR046350">
    <property type="entry name" value="Cystatin_sf"/>
</dbReference>
<dbReference type="PANTHER" id="PTHR47887">
    <property type="entry name" value="CYSTATIN-LIKE 1"/>
    <property type="match status" value="1"/>
</dbReference>
<dbReference type="PANTHER" id="PTHR47887:SF1">
    <property type="entry name" value="CYSTATIN-LIKE 1"/>
    <property type="match status" value="1"/>
</dbReference>
<dbReference type="Pfam" id="PF00031">
    <property type="entry name" value="Cystatin"/>
    <property type="match status" value="1"/>
</dbReference>
<dbReference type="SMART" id="SM00043">
    <property type="entry name" value="CY"/>
    <property type="match status" value="1"/>
</dbReference>
<dbReference type="SUPFAM" id="SSF54403">
    <property type="entry name" value="Cystatin/monellin"/>
    <property type="match status" value="1"/>
</dbReference>
<evidence type="ECO:0000250" key="1">
    <source>
        <dbReference type="UniProtKB" id="P19313"/>
    </source>
</evidence>
<evidence type="ECO:0000255" key="2"/>
<evidence type="ECO:0000269" key="3">
    <source>
    </source>
</evidence>
<evidence type="ECO:0000305" key="4"/>
<protein>
    <recommendedName>
        <fullName>Cystatin-like 1</fullName>
    </recommendedName>
    <alternativeName>
        <fullName>RCET11</fullName>
    </alternativeName>
</protein>
<sequence length="145" mass="16989">MGIGCWRNPLLLLIALVLSAKLGHFQRWEGFQQKLMSKKNMNSTLNFFIQSYNNASNDTYLYRVQRLIRSQMQLTTGVEYIVTVKIGWTKCKRNDTSNSSCPLQSKKLRKSLICESLIYTMPWINYFQLWNNSCLEAEHVGRNLR</sequence>
<comment type="subcellular location">
    <subcellularLocation>
        <location evidence="4">Secreted</location>
    </subcellularLocation>
</comment>
<comment type="similarity">
    <text evidence="4">Belongs to the cystatin family.</text>
</comment>
<feature type="signal peptide" evidence="2">
    <location>
        <begin position="1"/>
        <end position="19"/>
    </location>
</feature>
<feature type="chain" id="PRO_0000006662" description="Cystatin-like 1">
    <location>
        <begin position="20"/>
        <end position="145"/>
    </location>
</feature>
<feature type="domain" description="Cystatin" evidence="2">
    <location>
        <begin position="37"/>
        <end position="115"/>
    </location>
</feature>
<feature type="glycosylation site" description="N-linked (GlcNAc...) asparagine" evidence="2">
    <location>
        <position position="42"/>
    </location>
</feature>
<feature type="disulfide bond" evidence="1">
    <location>
        <begin position="91"/>
        <end position="101"/>
    </location>
</feature>
<feature type="disulfide bond" evidence="1">
    <location>
        <begin position="114"/>
        <end position="134"/>
    </location>
</feature>
<feature type="sequence variant" id="VAR_033841" description="In dbSNP:rs7361799.">
    <original>T</original>
    <variation>A</variation>
    <location>
        <position position="59"/>
    </location>
</feature>
<feature type="sequence variant" id="VAR_033842" description="In dbSNP:rs16985357.">
    <original>Y</original>
    <variation>F</variation>
    <location>
        <position position="62"/>
    </location>
</feature>
<feature type="sequence variant" id="VAR_033843" description="In dbSNP:rs17757442.">
    <original>R</original>
    <variation>K</variation>
    <location>
        <position position="66"/>
    </location>
</feature>
<feature type="sequence variant" id="VAR_024425" description="In dbSNP:rs3746736." evidence="3">
    <original>W</original>
    <variation>R</variation>
    <location>
        <position position="88"/>
    </location>
</feature>
<feature type="sequence variant" id="VAR_024426" description="In dbSNP:rs3746737.">
    <original>T</original>
    <variation>M</variation>
    <location>
        <position position="96"/>
    </location>
</feature>
<gene>
    <name type="primary">CSTL1</name>
</gene>
<reference key="1">
    <citation type="submission" date="2004-08" db="EMBL/GenBank/DDBJ databases">
        <title>Cloning and characterization of a molecular RCET11 related to cystatins and expressed in human reproductive tract specifically.</title>
        <authorList>
            <person name="Xiang Y."/>
            <person name="Nie D.S."/>
            <person name="Lu G.X."/>
        </authorList>
    </citation>
    <scope>NUCLEOTIDE SEQUENCE [MRNA]</scope>
</reference>
<reference key="2">
    <citation type="journal article" date="2001" name="Nature">
        <title>The DNA sequence and comparative analysis of human chromosome 20.</title>
        <authorList>
            <person name="Deloukas P."/>
            <person name="Matthews L.H."/>
            <person name="Ashurst J.L."/>
            <person name="Burton J."/>
            <person name="Gilbert J.G.R."/>
            <person name="Jones M."/>
            <person name="Stavrides G."/>
            <person name="Almeida J.P."/>
            <person name="Babbage A.K."/>
            <person name="Bagguley C.L."/>
            <person name="Bailey J."/>
            <person name="Barlow K.F."/>
            <person name="Bates K.N."/>
            <person name="Beard L.M."/>
            <person name="Beare D.M."/>
            <person name="Beasley O.P."/>
            <person name="Bird C.P."/>
            <person name="Blakey S.E."/>
            <person name="Bridgeman A.M."/>
            <person name="Brown A.J."/>
            <person name="Buck D."/>
            <person name="Burrill W.D."/>
            <person name="Butler A.P."/>
            <person name="Carder C."/>
            <person name="Carter N.P."/>
            <person name="Chapman J.C."/>
            <person name="Clamp M."/>
            <person name="Clark G."/>
            <person name="Clark L.N."/>
            <person name="Clark S.Y."/>
            <person name="Clee C.M."/>
            <person name="Clegg S."/>
            <person name="Cobley V.E."/>
            <person name="Collier R.E."/>
            <person name="Connor R.E."/>
            <person name="Corby N.R."/>
            <person name="Coulson A."/>
            <person name="Coville G.J."/>
            <person name="Deadman R."/>
            <person name="Dhami P.D."/>
            <person name="Dunn M."/>
            <person name="Ellington A.G."/>
            <person name="Frankland J.A."/>
            <person name="Fraser A."/>
            <person name="French L."/>
            <person name="Garner P."/>
            <person name="Grafham D.V."/>
            <person name="Griffiths C."/>
            <person name="Griffiths M.N.D."/>
            <person name="Gwilliam R."/>
            <person name="Hall R.E."/>
            <person name="Hammond S."/>
            <person name="Harley J.L."/>
            <person name="Heath P.D."/>
            <person name="Ho S."/>
            <person name="Holden J.L."/>
            <person name="Howden P.J."/>
            <person name="Huckle E."/>
            <person name="Hunt A.R."/>
            <person name="Hunt S.E."/>
            <person name="Jekosch K."/>
            <person name="Johnson C.M."/>
            <person name="Johnson D."/>
            <person name="Kay M.P."/>
            <person name="Kimberley A.M."/>
            <person name="King A."/>
            <person name="Knights A."/>
            <person name="Laird G.K."/>
            <person name="Lawlor S."/>
            <person name="Lehvaeslaiho M.H."/>
            <person name="Leversha M.A."/>
            <person name="Lloyd C."/>
            <person name="Lloyd D.M."/>
            <person name="Lovell J.D."/>
            <person name="Marsh V.L."/>
            <person name="Martin S.L."/>
            <person name="McConnachie L.J."/>
            <person name="McLay K."/>
            <person name="McMurray A.A."/>
            <person name="Milne S.A."/>
            <person name="Mistry D."/>
            <person name="Moore M.J.F."/>
            <person name="Mullikin J.C."/>
            <person name="Nickerson T."/>
            <person name="Oliver K."/>
            <person name="Parker A."/>
            <person name="Patel R."/>
            <person name="Pearce T.A.V."/>
            <person name="Peck A.I."/>
            <person name="Phillimore B.J.C.T."/>
            <person name="Prathalingam S.R."/>
            <person name="Plumb R.W."/>
            <person name="Ramsay H."/>
            <person name="Rice C.M."/>
            <person name="Ross M.T."/>
            <person name="Scott C.E."/>
            <person name="Sehra H.K."/>
            <person name="Shownkeen R."/>
            <person name="Sims S."/>
            <person name="Skuce C.D."/>
            <person name="Smith M.L."/>
            <person name="Soderlund C."/>
            <person name="Steward C.A."/>
            <person name="Sulston J.E."/>
            <person name="Swann R.M."/>
            <person name="Sycamore N."/>
            <person name="Taylor R."/>
            <person name="Tee L."/>
            <person name="Thomas D.W."/>
            <person name="Thorpe A."/>
            <person name="Tracey A."/>
            <person name="Tromans A.C."/>
            <person name="Vaudin M."/>
            <person name="Wall M."/>
            <person name="Wallis J.M."/>
            <person name="Whitehead S.L."/>
            <person name="Whittaker P."/>
            <person name="Willey D.L."/>
            <person name="Williams L."/>
            <person name="Williams S.A."/>
            <person name="Wilming L."/>
            <person name="Wray P.W."/>
            <person name="Hubbard T."/>
            <person name="Durbin R.M."/>
            <person name="Bentley D.R."/>
            <person name="Beck S."/>
            <person name="Rogers J."/>
        </authorList>
    </citation>
    <scope>NUCLEOTIDE SEQUENCE [LARGE SCALE GENOMIC DNA]</scope>
</reference>
<reference key="3">
    <citation type="journal article" date="2004" name="Genome Res.">
        <title>The status, quality, and expansion of the NIH full-length cDNA project: the Mammalian Gene Collection (MGC).</title>
        <authorList>
            <consortium name="The MGC Project Team"/>
        </authorList>
    </citation>
    <scope>NUCLEOTIDE SEQUENCE [LARGE SCALE MRNA]</scope>
    <scope>VARIANT ARG-88</scope>
    <source>
        <tissue>Testis</tissue>
    </source>
</reference>
<proteinExistence type="evidence at transcript level"/>
<organism>
    <name type="scientific">Homo sapiens</name>
    <name type="common">Human</name>
    <dbReference type="NCBI Taxonomy" id="9606"/>
    <lineage>
        <taxon>Eukaryota</taxon>
        <taxon>Metazoa</taxon>
        <taxon>Chordata</taxon>
        <taxon>Craniata</taxon>
        <taxon>Vertebrata</taxon>
        <taxon>Euteleostomi</taxon>
        <taxon>Mammalia</taxon>
        <taxon>Eutheria</taxon>
        <taxon>Euarchontoglires</taxon>
        <taxon>Primates</taxon>
        <taxon>Haplorrhini</taxon>
        <taxon>Catarrhini</taxon>
        <taxon>Hominidae</taxon>
        <taxon>Homo</taxon>
    </lineage>
</organism>
<accession>Q9H114</accession>
<accession>Q17RA8</accession>
<accession>Q64FF7</accession>
<keyword id="KW-1015">Disulfide bond</keyword>
<keyword id="KW-0325">Glycoprotein</keyword>
<keyword id="KW-0646">Protease inhibitor</keyword>
<keyword id="KW-1185">Reference proteome</keyword>
<keyword id="KW-0964">Secreted</keyword>
<keyword id="KW-0732">Signal</keyword>
<keyword id="KW-0789">Thiol protease inhibitor</keyword>